<comment type="function">
    <text evidence="1">Involved in base excision repair of DNA damaged by oxidation or by mutagenic agents. Acts as a DNA glycosylase that recognizes and removes damaged bases. Has a preference for oxidized purines, such as 7,8-dihydro-8-oxoguanine (8-oxoG). Has AP (apurinic/apyrimidinic) lyase activity and introduces nicks in the DNA strand. Cleaves the DNA backbone by beta-delta elimination to generate a single-strand break at the site of the removed base with both 3'- and 5'-phosphates (By similarity).</text>
</comment>
<comment type="catalytic activity">
    <reaction>
        <text>Hydrolysis of DNA containing ring-opened 7-methylguanine residues, releasing 2,6-diamino-4-hydroxy-5-(N-methyl)formamidopyrimidine.</text>
        <dbReference type="EC" id="3.2.2.23"/>
    </reaction>
</comment>
<comment type="catalytic activity">
    <reaction>
        <text>2'-deoxyribonucleotide-(2'-deoxyribose 5'-phosphate)-2'-deoxyribonucleotide-DNA = a 3'-end 2'-deoxyribonucleotide-(2,3-dehydro-2,3-deoxyribose 5'-phosphate)-DNA + a 5'-end 5'-phospho-2'-deoxyribonucleoside-DNA + H(+)</text>
        <dbReference type="Rhea" id="RHEA:66592"/>
        <dbReference type="Rhea" id="RHEA-COMP:13180"/>
        <dbReference type="Rhea" id="RHEA-COMP:16897"/>
        <dbReference type="Rhea" id="RHEA-COMP:17067"/>
        <dbReference type="ChEBI" id="CHEBI:15378"/>
        <dbReference type="ChEBI" id="CHEBI:136412"/>
        <dbReference type="ChEBI" id="CHEBI:157695"/>
        <dbReference type="ChEBI" id="CHEBI:167181"/>
        <dbReference type="EC" id="4.2.99.18"/>
    </reaction>
</comment>
<comment type="cofactor">
    <cofactor evidence="1">
        <name>Zn(2+)</name>
        <dbReference type="ChEBI" id="CHEBI:29105"/>
    </cofactor>
    <text evidence="1">Binds 1 zinc ion per subunit.</text>
</comment>
<comment type="subunit">
    <text evidence="1">Monomer.</text>
</comment>
<comment type="similarity">
    <text evidence="2">Belongs to the FPG family.</text>
</comment>
<accession>P55045</accession>
<feature type="initiator methionine" description="Removed" evidence="1">
    <location>
        <position position="1"/>
    </location>
</feature>
<feature type="chain" id="PRO_0000170868" description="Formamidopyrimidine-DNA glycosylase">
    <location>
        <begin position="2"/>
        <end position="273"/>
    </location>
</feature>
<feature type="zinc finger region" description="FPG-type">
    <location>
        <begin position="238"/>
        <end position="272"/>
    </location>
</feature>
<feature type="active site" description="Schiff-base intermediate with DNA" evidence="1">
    <location>
        <position position="2"/>
    </location>
</feature>
<feature type="active site" description="Proton donor" evidence="1">
    <location>
        <position position="3"/>
    </location>
</feature>
<feature type="active site" description="Proton donor; for beta-elimination activity" evidence="1">
    <location>
        <position position="58"/>
    </location>
</feature>
<feature type="active site" description="Proton donor; for delta-elimination activity" evidence="1">
    <location>
        <position position="262"/>
    </location>
</feature>
<feature type="binding site" evidence="1">
    <location>
        <position position="91"/>
    </location>
    <ligand>
        <name>DNA</name>
        <dbReference type="ChEBI" id="CHEBI:16991"/>
    </ligand>
</feature>
<feature type="binding site" evidence="1">
    <location>
        <position position="110"/>
    </location>
    <ligand>
        <name>DNA</name>
        <dbReference type="ChEBI" id="CHEBI:16991"/>
    </ligand>
</feature>
<feature type="sequence conflict" description="In Ref. 1; BAA05066." evidence="2" ref="1">
    <original>K</original>
    <variation>T</variation>
    <location>
        <position position="195"/>
    </location>
</feature>
<proteinExistence type="inferred from homology"/>
<name>FPG_STRMU</name>
<dbReference type="EC" id="3.2.2.23"/>
<dbReference type="EC" id="4.2.99.18"/>
<dbReference type="EMBL" id="D26071">
    <property type="protein sequence ID" value="BAA05066.1"/>
    <property type="molecule type" value="Genomic_DNA"/>
</dbReference>
<dbReference type="EMBL" id="AE014133">
    <property type="protein sequence ID" value="AAN59255.1"/>
    <property type="molecule type" value="Genomic_DNA"/>
</dbReference>
<dbReference type="RefSeq" id="NP_721949.1">
    <property type="nucleotide sequence ID" value="NC_004350.2"/>
</dbReference>
<dbReference type="RefSeq" id="WP_002262776.1">
    <property type="nucleotide sequence ID" value="NC_004350.2"/>
</dbReference>
<dbReference type="SMR" id="P55045"/>
<dbReference type="STRING" id="210007.SMU_1614"/>
<dbReference type="KEGG" id="smu:SMU_1614"/>
<dbReference type="PATRIC" id="fig|210007.7.peg.1437"/>
<dbReference type="eggNOG" id="COG0266">
    <property type="taxonomic scope" value="Bacteria"/>
</dbReference>
<dbReference type="HOGENOM" id="CLU_038423_1_2_9"/>
<dbReference type="OrthoDB" id="9800855at2"/>
<dbReference type="PhylomeDB" id="P55045"/>
<dbReference type="Proteomes" id="UP000002512">
    <property type="component" value="Chromosome"/>
</dbReference>
<dbReference type="GO" id="GO:0034039">
    <property type="term" value="F:8-oxo-7,8-dihydroguanine DNA N-glycosylase activity"/>
    <property type="evidence" value="ECO:0007669"/>
    <property type="project" value="TreeGrafter"/>
</dbReference>
<dbReference type="GO" id="GO:0140078">
    <property type="term" value="F:class I DNA-(apurinic or apyrimidinic site) endonuclease activity"/>
    <property type="evidence" value="ECO:0007669"/>
    <property type="project" value="UniProtKB-EC"/>
</dbReference>
<dbReference type="GO" id="GO:0003684">
    <property type="term" value="F:damaged DNA binding"/>
    <property type="evidence" value="ECO:0007669"/>
    <property type="project" value="InterPro"/>
</dbReference>
<dbReference type="GO" id="GO:0008270">
    <property type="term" value="F:zinc ion binding"/>
    <property type="evidence" value="ECO:0007669"/>
    <property type="project" value="UniProtKB-UniRule"/>
</dbReference>
<dbReference type="GO" id="GO:0006284">
    <property type="term" value="P:base-excision repair"/>
    <property type="evidence" value="ECO:0007669"/>
    <property type="project" value="InterPro"/>
</dbReference>
<dbReference type="CDD" id="cd08966">
    <property type="entry name" value="EcFpg-like_N"/>
    <property type="match status" value="1"/>
</dbReference>
<dbReference type="FunFam" id="1.10.8.50:FF:000003">
    <property type="entry name" value="Formamidopyrimidine-DNA glycosylase"/>
    <property type="match status" value="1"/>
</dbReference>
<dbReference type="FunFam" id="3.20.190.10:FF:000001">
    <property type="entry name" value="Formamidopyrimidine-DNA glycosylase"/>
    <property type="match status" value="1"/>
</dbReference>
<dbReference type="Gene3D" id="1.10.8.50">
    <property type="match status" value="1"/>
</dbReference>
<dbReference type="Gene3D" id="3.20.190.10">
    <property type="entry name" value="MutM-like, N-terminal"/>
    <property type="match status" value="1"/>
</dbReference>
<dbReference type="HAMAP" id="MF_00103">
    <property type="entry name" value="Fapy_DNA_glycosyl"/>
    <property type="match status" value="1"/>
</dbReference>
<dbReference type="InterPro" id="IPR015886">
    <property type="entry name" value="DNA_glyclase/AP_lyase_DNA-bd"/>
</dbReference>
<dbReference type="InterPro" id="IPR015887">
    <property type="entry name" value="DNA_glyclase_Znf_dom_DNA_BS"/>
</dbReference>
<dbReference type="InterPro" id="IPR020629">
    <property type="entry name" value="Formamido-pyr_DNA_Glyclase"/>
</dbReference>
<dbReference type="InterPro" id="IPR012319">
    <property type="entry name" value="FPG_cat"/>
</dbReference>
<dbReference type="InterPro" id="IPR035937">
    <property type="entry name" value="MutM-like_N-ter"/>
</dbReference>
<dbReference type="InterPro" id="IPR010979">
    <property type="entry name" value="Ribosomal_uS13-like_H2TH"/>
</dbReference>
<dbReference type="InterPro" id="IPR000214">
    <property type="entry name" value="Znf_DNA_glyclase/AP_lyase"/>
</dbReference>
<dbReference type="InterPro" id="IPR010663">
    <property type="entry name" value="Znf_FPG/IleRS"/>
</dbReference>
<dbReference type="NCBIfam" id="TIGR00577">
    <property type="entry name" value="fpg"/>
    <property type="match status" value="1"/>
</dbReference>
<dbReference type="NCBIfam" id="NF002211">
    <property type="entry name" value="PRK01103.1"/>
    <property type="match status" value="1"/>
</dbReference>
<dbReference type="PANTHER" id="PTHR22993">
    <property type="entry name" value="FORMAMIDOPYRIMIDINE-DNA GLYCOSYLASE"/>
    <property type="match status" value="1"/>
</dbReference>
<dbReference type="PANTHER" id="PTHR22993:SF9">
    <property type="entry name" value="FORMAMIDOPYRIMIDINE-DNA GLYCOSYLASE"/>
    <property type="match status" value="1"/>
</dbReference>
<dbReference type="Pfam" id="PF01149">
    <property type="entry name" value="Fapy_DNA_glyco"/>
    <property type="match status" value="1"/>
</dbReference>
<dbReference type="Pfam" id="PF06831">
    <property type="entry name" value="H2TH"/>
    <property type="match status" value="1"/>
</dbReference>
<dbReference type="Pfam" id="PF06827">
    <property type="entry name" value="zf-FPG_IleRS"/>
    <property type="match status" value="1"/>
</dbReference>
<dbReference type="SMART" id="SM00898">
    <property type="entry name" value="Fapy_DNA_glyco"/>
    <property type="match status" value="1"/>
</dbReference>
<dbReference type="SMART" id="SM01232">
    <property type="entry name" value="H2TH"/>
    <property type="match status" value="1"/>
</dbReference>
<dbReference type="SUPFAM" id="SSF57716">
    <property type="entry name" value="Glucocorticoid receptor-like (DNA-binding domain)"/>
    <property type="match status" value="1"/>
</dbReference>
<dbReference type="SUPFAM" id="SSF81624">
    <property type="entry name" value="N-terminal domain of MutM-like DNA repair proteins"/>
    <property type="match status" value="1"/>
</dbReference>
<dbReference type="SUPFAM" id="SSF46946">
    <property type="entry name" value="S13-like H2TH domain"/>
    <property type="match status" value="1"/>
</dbReference>
<dbReference type="PROSITE" id="PS51068">
    <property type="entry name" value="FPG_CAT"/>
    <property type="match status" value="1"/>
</dbReference>
<dbReference type="PROSITE" id="PS01242">
    <property type="entry name" value="ZF_FPG_1"/>
    <property type="match status" value="1"/>
</dbReference>
<dbReference type="PROSITE" id="PS51066">
    <property type="entry name" value="ZF_FPG_2"/>
    <property type="match status" value="1"/>
</dbReference>
<evidence type="ECO:0000250" key="1"/>
<evidence type="ECO:0000305" key="2"/>
<sequence>MPELPEVETVRRGLEHLIVGKKIVSVEVRVPKMVKTGVEDFQLDILGQTFESIGRRGKYLLLNLNRQTIISHLRMEGKYLLFEDEVPDNKHFHLFFGLDGGSTLVYQDVRKFGTFELLPKSQVEAYFVQKKIGPEPNAKDFKLKPFEEGLAKSHKVIKTLLLDQHLVAGLGNIYVDEVLWAAKVDPERLASQLKKSEIKRIHDETIRILQLAIEKGGSTIRSYKNSLGEDGSMQDCLQVYGKTDQPCARCATPIEKIKVGGRGTHFCPSCQKQ</sequence>
<reference key="1">
    <citation type="submission" date="1993-12" db="EMBL/GenBank/DDBJ databases">
        <authorList>
            <person name="Takamatsu N."/>
            <person name="Yamashita Y."/>
            <person name="Takehara T."/>
            <person name="Kuramitsu H.K."/>
        </authorList>
    </citation>
    <scope>NUCLEOTIDE SEQUENCE [GENOMIC DNA]</scope>
    <source>
        <strain>GS-5</strain>
    </source>
</reference>
<reference key="2">
    <citation type="journal article" date="2002" name="Proc. Natl. Acad. Sci. U.S.A.">
        <title>Genome sequence of Streptococcus mutans UA159, a cariogenic dental pathogen.</title>
        <authorList>
            <person name="Ajdic D.J."/>
            <person name="McShan W.M."/>
            <person name="McLaughlin R.E."/>
            <person name="Savic G."/>
            <person name="Chang J."/>
            <person name="Carson M.B."/>
            <person name="Primeaux C."/>
            <person name="Tian R."/>
            <person name="Kenton S."/>
            <person name="Jia H.G."/>
            <person name="Lin S.P."/>
            <person name="Qian Y."/>
            <person name="Li S."/>
            <person name="Zhu H."/>
            <person name="Najar F.Z."/>
            <person name="Lai H."/>
            <person name="White J."/>
            <person name="Roe B.A."/>
            <person name="Ferretti J.J."/>
        </authorList>
    </citation>
    <scope>NUCLEOTIDE SEQUENCE [LARGE SCALE GENOMIC DNA]</scope>
    <source>
        <strain>ATCC 700610 / UA159</strain>
    </source>
</reference>
<gene>
    <name type="primary">mutM</name>
    <name type="synonym">fpg</name>
    <name type="ordered locus">SMU_1614</name>
</gene>
<protein>
    <recommendedName>
        <fullName>Formamidopyrimidine-DNA glycosylase</fullName>
        <shortName>Fapy-DNA glycosylase</shortName>
        <ecNumber>3.2.2.23</ecNumber>
    </recommendedName>
    <alternativeName>
        <fullName>DNA-(apurinic or apyrimidinic site) lyase MutM</fullName>
        <shortName>AP lyase MutM</shortName>
        <ecNumber>4.2.99.18</ecNumber>
    </alternativeName>
</protein>
<keyword id="KW-0227">DNA damage</keyword>
<keyword id="KW-0234">DNA repair</keyword>
<keyword id="KW-0238">DNA-binding</keyword>
<keyword id="KW-0326">Glycosidase</keyword>
<keyword id="KW-0378">Hydrolase</keyword>
<keyword id="KW-0456">Lyase</keyword>
<keyword id="KW-0479">Metal-binding</keyword>
<keyword id="KW-0511">Multifunctional enzyme</keyword>
<keyword id="KW-1185">Reference proteome</keyword>
<keyword id="KW-0862">Zinc</keyword>
<keyword id="KW-0863">Zinc-finger</keyword>
<organism>
    <name type="scientific">Streptococcus mutans serotype c (strain ATCC 700610 / UA159)</name>
    <dbReference type="NCBI Taxonomy" id="210007"/>
    <lineage>
        <taxon>Bacteria</taxon>
        <taxon>Bacillati</taxon>
        <taxon>Bacillota</taxon>
        <taxon>Bacilli</taxon>
        <taxon>Lactobacillales</taxon>
        <taxon>Streptococcaceae</taxon>
        <taxon>Streptococcus</taxon>
    </lineage>
</organism>